<feature type="chain" id="PRO_1000047401" description="Glycine--tRNA ligase alpha subunit">
    <location>
        <begin position="1"/>
        <end position="303"/>
    </location>
</feature>
<organism>
    <name type="scientific">Bordetella pertussis (strain Tohama I / ATCC BAA-589 / NCTC 13251)</name>
    <dbReference type="NCBI Taxonomy" id="257313"/>
    <lineage>
        <taxon>Bacteria</taxon>
        <taxon>Pseudomonadati</taxon>
        <taxon>Pseudomonadota</taxon>
        <taxon>Betaproteobacteria</taxon>
        <taxon>Burkholderiales</taxon>
        <taxon>Alcaligenaceae</taxon>
        <taxon>Bordetella</taxon>
    </lineage>
</organism>
<name>SYGA_BORPE</name>
<evidence type="ECO:0000255" key="1">
    <source>
        <dbReference type="HAMAP-Rule" id="MF_00254"/>
    </source>
</evidence>
<keyword id="KW-0030">Aminoacyl-tRNA synthetase</keyword>
<keyword id="KW-0067">ATP-binding</keyword>
<keyword id="KW-0963">Cytoplasm</keyword>
<keyword id="KW-0436">Ligase</keyword>
<keyword id="KW-0547">Nucleotide-binding</keyword>
<keyword id="KW-0648">Protein biosynthesis</keyword>
<keyword id="KW-1185">Reference proteome</keyword>
<gene>
    <name evidence="1" type="primary">glyQ</name>
    <name type="ordered locus">BP0033</name>
</gene>
<accession>Q7W0Q6</accession>
<proteinExistence type="inferred from homology"/>
<reference key="1">
    <citation type="journal article" date="2003" name="Nat. Genet.">
        <title>Comparative analysis of the genome sequences of Bordetella pertussis, Bordetella parapertussis and Bordetella bronchiseptica.</title>
        <authorList>
            <person name="Parkhill J."/>
            <person name="Sebaihia M."/>
            <person name="Preston A."/>
            <person name="Murphy L.D."/>
            <person name="Thomson N.R."/>
            <person name="Harris D.E."/>
            <person name="Holden M.T.G."/>
            <person name="Churcher C.M."/>
            <person name="Bentley S.D."/>
            <person name="Mungall K.L."/>
            <person name="Cerdeno-Tarraga A.-M."/>
            <person name="Temple L."/>
            <person name="James K.D."/>
            <person name="Harris B."/>
            <person name="Quail M.A."/>
            <person name="Achtman M."/>
            <person name="Atkin R."/>
            <person name="Baker S."/>
            <person name="Basham D."/>
            <person name="Bason N."/>
            <person name="Cherevach I."/>
            <person name="Chillingworth T."/>
            <person name="Collins M."/>
            <person name="Cronin A."/>
            <person name="Davis P."/>
            <person name="Doggett J."/>
            <person name="Feltwell T."/>
            <person name="Goble A."/>
            <person name="Hamlin N."/>
            <person name="Hauser H."/>
            <person name="Holroyd S."/>
            <person name="Jagels K."/>
            <person name="Leather S."/>
            <person name="Moule S."/>
            <person name="Norberczak H."/>
            <person name="O'Neil S."/>
            <person name="Ormond D."/>
            <person name="Price C."/>
            <person name="Rabbinowitsch E."/>
            <person name="Rutter S."/>
            <person name="Sanders M."/>
            <person name="Saunders D."/>
            <person name="Seeger K."/>
            <person name="Sharp S."/>
            <person name="Simmonds M."/>
            <person name="Skelton J."/>
            <person name="Squares R."/>
            <person name="Squares S."/>
            <person name="Stevens K."/>
            <person name="Unwin L."/>
            <person name="Whitehead S."/>
            <person name="Barrell B.G."/>
            <person name="Maskell D.J."/>
        </authorList>
    </citation>
    <scope>NUCLEOTIDE SEQUENCE [LARGE SCALE GENOMIC DNA]</scope>
    <source>
        <strain>Tohama I / ATCC BAA-589 / NCTC 13251</strain>
    </source>
</reference>
<protein>
    <recommendedName>
        <fullName evidence="1">Glycine--tRNA ligase alpha subunit</fullName>
        <ecNumber evidence="1">6.1.1.14</ecNumber>
    </recommendedName>
    <alternativeName>
        <fullName evidence="1">Glycyl-tRNA synthetase alpha subunit</fullName>
        <shortName evidence="1">GlyRS</shortName>
    </alternativeName>
</protein>
<comment type="catalytic activity">
    <reaction evidence="1">
        <text>tRNA(Gly) + glycine + ATP = glycyl-tRNA(Gly) + AMP + diphosphate</text>
        <dbReference type="Rhea" id="RHEA:16013"/>
        <dbReference type="Rhea" id="RHEA-COMP:9664"/>
        <dbReference type="Rhea" id="RHEA-COMP:9683"/>
        <dbReference type="ChEBI" id="CHEBI:30616"/>
        <dbReference type="ChEBI" id="CHEBI:33019"/>
        <dbReference type="ChEBI" id="CHEBI:57305"/>
        <dbReference type="ChEBI" id="CHEBI:78442"/>
        <dbReference type="ChEBI" id="CHEBI:78522"/>
        <dbReference type="ChEBI" id="CHEBI:456215"/>
        <dbReference type="EC" id="6.1.1.14"/>
    </reaction>
</comment>
<comment type="subunit">
    <text evidence="1">Tetramer of two alpha and two beta subunits.</text>
</comment>
<comment type="subcellular location">
    <subcellularLocation>
        <location evidence="1">Cytoplasm</location>
    </subcellularLocation>
</comment>
<comment type="similarity">
    <text evidence="1">Belongs to the class-II aminoacyl-tRNA synthetase family.</text>
</comment>
<dbReference type="EC" id="6.1.1.14" evidence="1"/>
<dbReference type="EMBL" id="BX640411">
    <property type="protein sequence ID" value="CAE40412.1"/>
    <property type="molecule type" value="Genomic_DNA"/>
</dbReference>
<dbReference type="RefSeq" id="NP_878947.1">
    <property type="nucleotide sequence ID" value="NC_002929.2"/>
</dbReference>
<dbReference type="RefSeq" id="WP_010929585.1">
    <property type="nucleotide sequence ID" value="NZ_CP039022.1"/>
</dbReference>
<dbReference type="SMR" id="Q7W0Q6"/>
<dbReference type="STRING" id="257313.BP0033"/>
<dbReference type="PaxDb" id="257313-BP0033"/>
<dbReference type="GeneID" id="69599939"/>
<dbReference type="KEGG" id="bpe:BP0033"/>
<dbReference type="PATRIC" id="fig|257313.5.peg.35"/>
<dbReference type="eggNOG" id="COG0752">
    <property type="taxonomic scope" value="Bacteria"/>
</dbReference>
<dbReference type="HOGENOM" id="CLU_057066_1_0_4"/>
<dbReference type="Proteomes" id="UP000002676">
    <property type="component" value="Chromosome"/>
</dbReference>
<dbReference type="GO" id="GO:0005829">
    <property type="term" value="C:cytosol"/>
    <property type="evidence" value="ECO:0007669"/>
    <property type="project" value="TreeGrafter"/>
</dbReference>
<dbReference type="GO" id="GO:0005524">
    <property type="term" value="F:ATP binding"/>
    <property type="evidence" value="ECO:0007669"/>
    <property type="project" value="UniProtKB-UniRule"/>
</dbReference>
<dbReference type="GO" id="GO:0004820">
    <property type="term" value="F:glycine-tRNA ligase activity"/>
    <property type="evidence" value="ECO:0007669"/>
    <property type="project" value="UniProtKB-UniRule"/>
</dbReference>
<dbReference type="GO" id="GO:0006426">
    <property type="term" value="P:glycyl-tRNA aminoacylation"/>
    <property type="evidence" value="ECO:0007669"/>
    <property type="project" value="UniProtKB-UniRule"/>
</dbReference>
<dbReference type="CDD" id="cd00733">
    <property type="entry name" value="GlyRS_alpha_core"/>
    <property type="match status" value="1"/>
</dbReference>
<dbReference type="FunFam" id="3.30.930.10:FF:000006">
    <property type="entry name" value="Glycine--tRNA ligase alpha subunit"/>
    <property type="match status" value="1"/>
</dbReference>
<dbReference type="Gene3D" id="3.30.930.10">
    <property type="entry name" value="Bira Bifunctional Protein, Domain 2"/>
    <property type="match status" value="1"/>
</dbReference>
<dbReference type="Gene3D" id="1.20.58.180">
    <property type="entry name" value="Class II aaRS and biotin synthetases, domain 2"/>
    <property type="match status" value="1"/>
</dbReference>
<dbReference type="HAMAP" id="MF_00254">
    <property type="entry name" value="Gly_tRNA_synth_alpha"/>
    <property type="match status" value="1"/>
</dbReference>
<dbReference type="InterPro" id="IPR045864">
    <property type="entry name" value="aa-tRNA-synth_II/BPL/LPL"/>
</dbReference>
<dbReference type="InterPro" id="IPR006194">
    <property type="entry name" value="Gly-tRNA-synth_heterodimer"/>
</dbReference>
<dbReference type="InterPro" id="IPR002310">
    <property type="entry name" value="Gly-tRNA_ligase_asu"/>
</dbReference>
<dbReference type="NCBIfam" id="TIGR00388">
    <property type="entry name" value="glyQ"/>
    <property type="match status" value="1"/>
</dbReference>
<dbReference type="NCBIfam" id="NF006827">
    <property type="entry name" value="PRK09348.1"/>
    <property type="match status" value="1"/>
</dbReference>
<dbReference type="PANTHER" id="PTHR30075:SF2">
    <property type="entry name" value="GLYCINE--TRNA LIGASE, CHLOROPLASTIC_MITOCHONDRIAL 2"/>
    <property type="match status" value="1"/>
</dbReference>
<dbReference type="PANTHER" id="PTHR30075">
    <property type="entry name" value="GLYCYL-TRNA SYNTHETASE"/>
    <property type="match status" value="1"/>
</dbReference>
<dbReference type="Pfam" id="PF02091">
    <property type="entry name" value="tRNA-synt_2e"/>
    <property type="match status" value="1"/>
</dbReference>
<dbReference type="PRINTS" id="PR01044">
    <property type="entry name" value="TRNASYNTHGA"/>
</dbReference>
<dbReference type="SUPFAM" id="SSF55681">
    <property type="entry name" value="Class II aaRS and biotin synthetases"/>
    <property type="match status" value="1"/>
</dbReference>
<dbReference type="PROSITE" id="PS50861">
    <property type="entry name" value="AA_TRNA_LIGASE_II_GLYAB"/>
    <property type="match status" value="1"/>
</dbReference>
<sequence>MLTFQQIILTLQDYWDKQGCALLQPYDMEVGAGTSHTATFLRAIGPEPWRAAYVQPSRRPKDGRYGENPNRLQHYYQYQVVLKPAPPEILDLYIGSLKALGIDPTQHDIRFVEDDWENPTLGAWGLGWEVWLNGMEVTQFTYFQQVGGLDCTPTTGEITYGLERLAMYLQDVESVYDLVWTEGANGNRVYYRDVFHQNEVEQSTYNFEHASADMLFAHFNDYEAEAKRLMDVPLALPAYEAALKAAHTFNMLDARGAISVTERAAYIGRIRNLSRAVAQAYYDSRERLGFPMLAGRKAAGEAA</sequence>